<evidence type="ECO:0000255" key="1">
    <source>
        <dbReference type="HAMAP-Rule" id="MF_00265"/>
    </source>
</evidence>
<evidence type="ECO:0000305" key="2"/>
<geneLocation type="plasmid">
    <name>pDC3000B</name>
</geneLocation>
<sequence>MILLDTNVISEPQRREPNAHVLDWIDAQALETLYLSTITVAELRAGIALMPVGKRQDSLRENLEKHLLPMFANRVLSFDMTCTKAYAELLAKSRAAGLAVETADAFIAAIALANGFTVATRDTGPFEAAGLNVINPWEA</sequence>
<feature type="chain" id="PRO_0000072256" description="Plasmid stability protein StbB">
    <location>
        <begin position="1"/>
        <end position="139"/>
    </location>
</feature>
<feature type="domain" description="PINc" evidence="1">
    <location>
        <begin position="2"/>
        <end position="136"/>
    </location>
</feature>
<feature type="binding site" evidence="1">
    <location>
        <position position="5"/>
    </location>
    <ligand>
        <name>Mg(2+)</name>
        <dbReference type="ChEBI" id="CHEBI:18420"/>
    </ligand>
</feature>
<feature type="binding site" evidence="1">
    <location>
        <position position="104"/>
    </location>
    <ligand>
        <name>Mg(2+)</name>
        <dbReference type="ChEBI" id="CHEBI:18420"/>
    </ligand>
</feature>
<feature type="sequence conflict" description="In Ref. 1; AAB81645." evidence="2" ref="1">
    <original>L</original>
    <variation>M</variation>
    <location>
        <position position="35"/>
    </location>
</feature>
<comment type="function">
    <text evidence="1">Toxic component of a type II toxin-antitoxin (TA) system. An RNase (By similarity). Involved in plasmid stability.</text>
</comment>
<comment type="cofactor">
    <cofactor evidence="1">
        <name>Mg(2+)</name>
        <dbReference type="ChEBI" id="CHEBI:18420"/>
    </cofactor>
</comment>
<comment type="similarity">
    <text evidence="1">Belongs to the PINc/VapC protein family.</text>
</comment>
<keyword id="KW-0378">Hydrolase</keyword>
<keyword id="KW-0460">Magnesium</keyword>
<keyword id="KW-0479">Metal-binding</keyword>
<keyword id="KW-0540">Nuclease</keyword>
<keyword id="KW-0614">Plasmid</keyword>
<keyword id="KW-1185">Reference proteome</keyword>
<keyword id="KW-1277">Toxin-antitoxin system</keyword>
<gene>
    <name type="primary">stbB</name>
    <name type="ordered locus">PSPTO_B0018</name>
</gene>
<protein>
    <recommendedName>
        <fullName>Plasmid stability protein StbB</fullName>
    </recommendedName>
    <alternativeName>
        <fullName>Ribonuclease StbB</fullName>
        <shortName>RNase StbB</shortName>
        <ecNumber evidence="1">3.1.-.-</ecNumber>
    </alternativeName>
    <alternativeName>
        <fullName>Toxin StbB</fullName>
    </alternativeName>
</protein>
<proteinExistence type="inferred from homology"/>
<name>STBB_PSESM</name>
<reference key="1">
    <citation type="journal article" date="1997" name="FEBS Lett.">
        <title>Avirulence gene D of Pseudomonas syringae pv. tomato may have undergone horizontal gene transfer.</title>
        <authorList>
            <person name="Hanekamp T."/>
            <person name="Kobayashi D."/>
            <person name="Hayes S."/>
            <person name="Stayton M.M."/>
        </authorList>
    </citation>
    <scope>NUCLEOTIDE SEQUENCE [GENOMIC DNA]</scope>
</reference>
<reference key="2">
    <citation type="journal article" date="2003" name="Proc. Natl. Acad. Sci. U.S.A.">
        <title>The complete genome sequence of the Arabidopsis and tomato pathogen Pseudomonas syringae pv. tomato DC3000.</title>
        <authorList>
            <person name="Buell C.R."/>
            <person name="Joardar V."/>
            <person name="Lindeberg M."/>
            <person name="Selengut J."/>
            <person name="Paulsen I.T."/>
            <person name="Gwinn M.L."/>
            <person name="Dodson R.J."/>
            <person name="DeBoy R.T."/>
            <person name="Durkin A.S."/>
            <person name="Kolonay J.F."/>
            <person name="Madupu R."/>
            <person name="Daugherty S.C."/>
            <person name="Brinkac L.M."/>
            <person name="Beanan M.J."/>
            <person name="Haft D.H."/>
            <person name="Nelson W.C."/>
            <person name="Davidsen T.M."/>
            <person name="Zafar N."/>
            <person name="Zhou L."/>
            <person name="Liu J."/>
            <person name="Yuan Q."/>
            <person name="Khouri H.M."/>
            <person name="Fedorova N.B."/>
            <person name="Tran B."/>
            <person name="Russell D."/>
            <person name="Berry K.J."/>
            <person name="Utterback T.R."/>
            <person name="Van Aken S.E."/>
            <person name="Feldblyum T.V."/>
            <person name="D'Ascenzo M."/>
            <person name="Deng W.-L."/>
            <person name="Ramos A.R."/>
            <person name="Alfano J.R."/>
            <person name="Cartinhour S."/>
            <person name="Chatterjee A.K."/>
            <person name="Delaney T.P."/>
            <person name="Lazarowitz S.G."/>
            <person name="Martin G.B."/>
            <person name="Schneider D.J."/>
            <person name="Tang X."/>
            <person name="Bender C.L."/>
            <person name="White O."/>
            <person name="Fraser C.M."/>
            <person name="Collmer A."/>
        </authorList>
    </citation>
    <scope>NUCLEOTIDE SEQUENCE [LARGE SCALE GENOMIC DNA]</scope>
    <source>
        <strain>ATCC BAA-871 / DC3000</strain>
        <plasmid>pDC3000B</plasmid>
    </source>
</reference>
<organism>
    <name type="scientific">Pseudomonas syringae pv. tomato (strain ATCC BAA-871 / DC3000)</name>
    <dbReference type="NCBI Taxonomy" id="223283"/>
    <lineage>
        <taxon>Bacteria</taxon>
        <taxon>Pseudomonadati</taxon>
        <taxon>Pseudomonadota</taxon>
        <taxon>Gammaproteobacteria</taxon>
        <taxon>Pseudomonadales</taxon>
        <taxon>Pseudomonadaceae</taxon>
        <taxon>Pseudomonas</taxon>
    </lineage>
</organism>
<accession>Q52562</accession>
<dbReference type="EC" id="3.1.-.-" evidence="1"/>
<dbReference type="EMBL" id="L48985">
    <property type="protein sequence ID" value="AAB81645.1"/>
    <property type="molecule type" value="Genomic_DNA"/>
</dbReference>
<dbReference type="EMBL" id="AE016854">
    <property type="protein sequence ID" value="AAO59109.1"/>
    <property type="molecule type" value="Genomic_DNA"/>
</dbReference>
<dbReference type="RefSeq" id="NP_808606.1">
    <property type="nucleotide sequence ID" value="NC_004632.1"/>
</dbReference>
<dbReference type="RefSeq" id="WP_005769733.1">
    <property type="nucleotide sequence ID" value="NC_004632.1"/>
</dbReference>
<dbReference type="SMR" id="Q52562"/>
<dbReference type="GeneID" id="1187396"/>
<dbReference type="KEGG" id="pst:PSPTO_B0018"/>
<dbReference type="PATRIC" id="fig|223283.9.peg.5772"/>
<dbReference type="HOGENOM" id="CLU_118482_8_2_6"/>
<dbReference type="OrthoDB" id="9804823at2"/>
<dbReference type="PhylomeDB" id="Q52562"/>
<dbReference type="Proteomes" id="UP000002515">
    <property type="component" value="Plasmid pDC3000B"/>
</dbReference>
<dbReference type="GO" id="GO:0000287">
    <property type="term" value="F:magnesium ion binding"/>
    <property type="evidence" value="ECO:0007669"/>
    <property type="project" value="UniProtKB-UniRule"/>
</dbReference>
<dbReference type="GO" id="GO:0004540">
    <property type="term" value="F:RNA nuclease activity"/>
    <property type="evidence" value="ECO:0007669"/>
    <property type="project" value="InterPro"/>
</dbReference>
<dbReference type="CDD" id="cd18731">
    <property type="entry name" value="PIN_NgFitB-like"/>
    <property type="match status" value="1"/>
</dbReference>
<dbReference type="Gene3D" id="3.40.50.1010">
    <property type="entry name" value="5'-nuclease"/>
    <property type="match status" value="1"/>
</dbReference>
<dbReference type="HAMAP" id="MF_00265">
    <property type="entry name" value="VapC_Nob1"/>
    <property type="match status" value="1"/>
</dbReference>
<dbReference type="InterPro" id="IPR029060">
    <property type="entry name" value="PIN-like_dom_sf"/>
</dbReference>
<dbReference type="InterPro" id="IPR002716">
    <property type="entry name" value="PIN_dom"/>
</dbReference>
<dbReference type="InterPro" id="IPR050556">
    <property type="entry name" value="Type_II_TA_system_RNase"/>
</dbReference>
<dbReference type="InterPro" id="IPR022907">
    <property type="entry name" value="VapC_family"/>
</dbReference>
<dbReference type="PANTHER" id="PTHR33653">
    <property type="entry name" value="RIBONUCLEASE VAPC2"/>
    <property type="match status" value="1"/>
</dbReference>
<dbReference type="PANTHER" id="PTHR33653:SF1">
    <property type="entry name" value="RIBONUCLEASE VAPC2"/>
    <property type="match status" value="1"/>
</dbReference>
<dbReference type="Pfam" id="PF01850">
    <property type="entry name" value="PIN"/>
    <property type="match status" value="1"/>
</dbReference>
<dbReference type="SUPFAM" id="SSF88723">
    <property type="entry name" value="PIN domain-like"/>
    <property type="match status" value="1"/>
</dbReference>